<organism>
    <name type="scientific">Arabidopsis thaliana</name>
    <name type="common">Mouse-ear cress</name>
    <dbReference type="NCBI Taxonomy" id="3702"/>
    <lineage>
        <taxon>Eukaryota</taxon>
        <taxon>Viridiplantae</taxon>
        <taxon>Streptophyta</taxon>
        <taxon>Embryophyta</taxon>
        <taxon>Tracheophyta</taxon>
        <taxon>Spermatophyta</taxon>
        <taxon>Magnoliopsida</taxon>
        <taxon>eudicotyledons</taxon>
        <taxon>Gunneridae</taxon>
        <taxon>Pentapetalae</taxon>
        <taxon>rosids</taxon>
        <taxon>malvids</taxon>
        <taxon>Brassicales</taxon>
        <taxon>Brassicaceae</taxon>
        <taxon>Camelineae</taxon>
        <taxon>Arabidopsis</taxon>
    </lineage>
</organism>
<accession>Q9M1Q9</accession>
<accession>A0A1I9LRJ8</accession>
<accession>F4IX45</accession>
<dbReference type="EMBL" id="AL138651">
    <property type="protein sequence ID" value="CAB71875.1"/>
    <property type="status" value="ALT_SEQ"/>
    <property type="molecule type" value="Genomic_DNA"/>
</dbReference>
<dbReference type="EMBL" id="CP002686">
    <property type="protein sequence ID" value="AEE80316.1"/>
    <property type="molecule type" value="Genomic_DNA"/>
</dbReference>
<dbReference type="EMBL" id="CP002686">
    <property type="protein sequence ID" value="ANM65205.1"/>
    <property type="molecule type" value="Genomic_DNA"/>
</dbReference>
<dbReference type="EMBL" id="CP002686">
    <property type="protein sequence ID" value="ANM65206.1"/>
    <property type="molecule type" value="Genomic_DNA"/>
</dbReference>
<dbReference type="PIR" id="T48007">
    <property type="entry name" value="T48007"/>
</dbReference>
<dbReference type="RefSeq" id="NP_001327192.1">
    <property type="nucleotide sequence ID" value="NM_001340143.1"/>
</dbReference>
<dbReference type="RefSeq" id="NP_001327193.1">
    <property type="nucleotide sequence ID" value="NM_001340142.1"/>
</dbReference>
<dbReference type="RefSeq" id="NP_191774.2">
    <property type="nucleotide sequence ID" value="NM_116080.3"/>
</dbReference>
<dbReference type="SMR" id="Q9M1Q9"/>
<dbReference type="FunCoup" id="Q9M1Q9">
    <property type="interactions" value="277"/>
</dbReference>
<dbReference type="STRING" id="3702.Q9M1Q9"/>
<dbReference type="TCDB" id="3.A.1.201.36">
    <property type="family name" value="the atp-binding cassette (abc) superfamily"/>
</dbReference>
<dbReference type="GlyCosmos" id="Q9M1Q9">
    <property type="glycosylation" value="8 sites, No reported glycans"/>
</dbReference>
<dbReference type="GlyGen" id="Q9M1Q9">
    <property type="glycosylation" value="8 sites"/>
</dbReference>
<dbReference type="iPTMnet" id="Q9M1Q9"/>
<dbReference type="PaxDb" id="3702-AT3G62150.1"/>
<dbReference type="ProteomicsDB" id="243270"/>
<dbReference type="EnsemblPlants" id="AT3G62150.1">
    <property type="protein sequence ID" value="AT3G62150.1"/>
    <property type="gene ID" value="AT3G62150"/>
</dbReference>
<dbReference type="EnsemblPlants" id="AT3G62150.2">
    <property type="protein sequence ID" value="AT3G62150.2"/>
    <property type="gene ID" value="AT3G62150"/>
</dbReference>
<dbReference type="EnsemblPlants" id="AT3G62150.3">
    <property type="protein sequence ID" value="AT3G62150.3"/>
    <property type="gene ID" value="AT3G62150"/>
</dbReference>
<dbReference type="GeneID" id="825388"/>
<dbReference type="Gramene" id="AT3G62150.1">
    <property type="protein sequence ID" value="AT3G62150.1"/>
    <property type="gene ID" value="AT3G62150"/>
</dbReference>
<dbReference type="Gramene" id="AT3G62150.2">
    <property type="protein sequence ID" value="AT3G62150.2"/>
    <property type="gene ID" value="AT3G62150"/>
</dbReference>
<dbReference type="Gramene" id="AT3G62150.3">
    <property type="protein sequence ID" value="AT3G62150.3"/>
    <property type="gene ID" value="AT3G62150"/>
</dbReference>
<dbReference type="KEGG" id="ath:AT3G62150"/>
<dbReference type="Araport" id="AT3G62150"/>
<dbReference type="TAIR" id="AT3G62150">
    <property type="gene designation" value="ABCB21"/>
</dbReference>
<dbReference type="eggNOG" id="KOG0055">
    <property type="taxonomic scope" value="Eukaryota"/>
</dbReference>
<dbReference type="HOGENOM" id="CLU_000604_17_2_1"/>
<dbReference type="InParanoid" id="Q9M1Q9"/>
<dbReference type="OMA" id="KFNRNEW"/>
<dbReference type="BioCyc" id="ARA:AT3G62150-MONOMER"/>
<dbReference type="PRO" id="PR:Q9M1Q9"/>
<dbReference type="Proteomes" id="UP000006548">
    <property type="component" value="Chromosome 3"/>
</dbReference>
<dbReference type="ExpressionAtlas" id="Q9M1Q9">
    <property type="expression patterns" value="baseline and differential"/>
</dbReference>
<dbReference type="GO" id="GO:0005829">
    <property type="term" value="C:cytosol"/>
    <property type="evidence" value="ECO:0007005"/>
    <property type="project" value="TAIR"/>
</dbReference>
<dbReference type="GO" id="GO:0000325">
    <property type="term" value="C:plant-type vacuole"/>
    <property type="evidence" value="ECO:0007005"/>
    <property type="project" value="TAIR"/>
</dbReference>
<dbReference type="GO" id="GO:0005886">
    <property type="term" value="C:plasma membrane"/>
    <property type="evidence" value="ECO:0000314"/>
    <property type="project" value="TAIR"/>
</dbReference>
<dbReference type="GO" id="GO:0140359">
    <property type="term" value="F:ABC-type transporter activity"/>
    <property type="evidence" value="ECO:0007669"/>
    <property type="project" value="InterPro"/>
</dbReference>
<dbReference type="GO" id="GO:0005524">
    <property type="term" value="F:ATP binding"/>
    <property type="evidence" value="ECO:0007669"/>
    <property type="project" value="UniProtKB-KW"/>
</dbReference>
<dbReference type="GO" id="GO:0016887">
    <property type="term" value="F:ATP hydrolysis activity"/>
    <property type="evidence" value="ECO:0007669"/>
    <property type="project" value="InterPro"/>
</dbReference>
<dbReference type="GO" id="GO:0010329">
    <property type="term" value="F:auxin efflux transmembrane transporter activity"/>
    <property type="evidence" value="ECO:0000314"/>
    <property type="project" value="TAIR"/>
</dbReference>
<dbReference type="GO" id="GO:0010328">
    <property type="term" value="F:auxin influx transmembrane transporter activity"/>
    <property type="evidence" value="ECO:0000314"/>
    <property type="project" value="TAIR"/>
</dbReference>
<dbReference type="GO" id="GO:0010315">
    <property type="term" value="P:auxin export across the plasma membrane"/>
    <property type="evidence" value="ECO:0000314"/>
    <property type="project" value="TAIR"/>
</dbReference>
<dbReference type="GO" id="GO:0060919">
    <property type="term" value="P:auxin import into cell"/>
    <property type="evidence" value="ECO:0000314"/>
    <property type="project" value="TAIR"/>
</dbReference>
<dbReference type="CDD" id="cd18577">
    <property type="entry name" value="ABC_6TM_Pgp_ABCB1_D1_like"/>
    <property type="match status" value="1"/>
</dbReference>
<dbReference type="CDD" id="cd18578">
    <property type="entry name" value="ABC_6TM_Pgp_ABCB1_D2_like"/>
    <property type="match status" value="1"/>
</dbReference>
<dbReference type="CDD" id="cd03249">
    <property type="entry name" value="ABC_MTABC3_MDL1_MDL2"/>
    <property type="match status" value="2"/>
</dbReference>
<dbReference type="FunFam" id="1.20.1560.10:FF:000009">
    <property type="entry name" value="ABC transporter B family member 1"/>
    <property type="match status" value="1"/>
</dbReference>
<dbReference type="FunFam" id="3.40.50.300:FF:000066">
    <property type="entry name" value="ABC transporter B family member 1"/>
    <property type="match status" value="2"/>
</dbReference>
<dbReference type="FunFam" id="1.20.1560.10:FF:000025">
    <property type="entry name" value="ABC transporter B family member 9"/>
    <property type="match status" value="1"/>
</dbReference>
<dbReference type="FunFam" id="1.20.1560.10:FF:000044">
    <property type="entry name" value="ABC transporter B family member 9"/>
    <property type="match status" value="1"/>
</dbReference>
<dbReference type="Gene3D" id="1.20.1560.10">
    <property type="entry name" value="ABC transporter type 1, transmembrane domain"/>
    <property type="match status" value="1"/>
</dbReference>
<dbReference type="Gene3D" id="3.40.50.300">
    <property type="entry name" value="P-loop containing nucleotide triphosphate hydrolases"/>
    <property type="match status" value="2"/>
</dbReference>
<dbReference type="InterPro" id="IPR003593">
    <property type="entry name" value="AAA+_ATPase"/>
</dbReference>
<dbReference type="InterPro" id="IPR011527">
    <property type="entry name" value="ABC1_TM_dom"/>
</dbReference>
<dbReference type="InterPro" id="IPR036640">
    <property type="entry name" value="ABC1_TM_sf"/>
</dbReference>
<dbReference type="InterPro" id="IPR003439">
    <property type="entry name" value="ABC_transporter-like_ATP-bd"/>
</dbReference>
<dbReference type="InterPro" id="IPR017871">
    <property type="entry name" value="ABC_transporter-like_CS"/>
</dbReference>
<dbReference type="InterPro" id="IPR027417">
    <property type="entry name" value="P-loop_NTPase"/>
</dbReference>
<dbReference type="InterPro" id="IPR039421">
    <property type="entry name" value="Type_1_exporter"/>
</dbReference>
<dbReference type="PANTHER" id="PTHR43394:SF16">
    <property type="entry name" value="ABC TRANSPORTER B FAMILY MEMBER 4-LIKE ISOFORM X1"/>
    <property type="match status" value="1"/>
</dbReference>
<dbReference type="PANTHER" id="PTHR43394">
    <property type="entry name" value="ATP-DEPENDENT PERMEASE MDL1, MITOCHONDRIAL"/>
    <property type="match status" value="1"/>
</dbReference>
<dbReference type="Pfam" id="PF00664">
    <property type="entry name" value="ABC_membrane"/>
    <property type="match status" value="2"/>
</dbReference>
<dbReference type="Pfam" id="PF00005">
    <property type="entry name" value="ABC_tran"/>
    <property type="match status" value="2"/>
</dbReference>
<dbReference type="SMART" id="SM00382">
    <property type="entry name" value="AAA"/>
    <property type="match status" value="2"/>
</dbReference>
<dbReference type="SUPFAM" id="SSF90123">
    <property type="entry name" value="ABC transporter transmembrane region"/>
    <property type="match status" value="2"/>
</dbReference>
<dbReference type="SUPFAM" id="SSF52540">
    <property type="entry name" value="P-loop containing nucleoside triphosphate hydrolases"/>
    <property type="match status" value="2"/>
</dbReference>
<dbReference type="PROSITE" id="PS50929">
    <property type="entry name" value="ABC_TM1F"/>
    <property type="match status" value="2"/>
</dbReference>
<dbReference type="PROSITE" id="PS00211">
    <property type="entry name" value="ABC_TRANSPORTER_1"/>
    <property type="match status" value="2"/>
</dbReference>
<dbReference type="PROSITE" id="PS50893">
    <property type="entry name" value="ABC_TRANSPORTER_2"/>
    <property type="match status" value="2"/>
</dbReference>
<feature type="chain" id="PRO_0000227928" description="ABC transporter B family member 21">
    <location>
        <begin position="1"/>
        <end position="1296"/>
    </location>
</feature>
<feature type="transmembrane region" description="Helical" evidence="3">
    <location>
        <begin position="77"/>
        <end position="97"/>
    </location>
</feature>
<feature type="transmembrane region" description="Helical" evidence="3">
    <location>
        <begin position="128"/>
        <end position="148"/>
    </location>
</feature>
<feature type="transmembrane region" description="Helical" evidence="3">
    <location>
        <begin position="205"/>
        <end position="225"/>
    </location>
</feature>
<feature type="transmembrane region" description="Helical" evidence="3">
    <location>
        <begin position="227"/>
        <end position="247"/>
    </location>
</feature>
<feature type="transmembrane region" description="Helical" evidence="3">
    <location>
        <begin position="307"/>
        <end position="327"/>
    </location>
</feature>
<feature type="transmembrane region" description="Helical" evidence="3">
    <location>
        <begin position="336"/>
        <end position="356"/>
    </location>
</feature>
<feature type="transmembrane region" description="Helical" evidence="3">
    <location>
        <begin position="731"/>
        <end position="751"/>
    </location>
</feature>
<feature type="transmembrane region" description="Helical" evidence="3">
    <location>
        <begin position="774"/>
        <end position="794"/>
    </location>
</feature>
<feature type="transmembrane region" description="Helical" evidence="3">
    <location>
        <begin position="865"/>
        <end position="885"/>
    </location>
</feature>
<feature type="transmembrane region" description="Helical" evidence="3">
    <location>
        <begin position="952"/>
        <end position="972"/>
    </location>
</feature>
<feature type="transmembrane region" description="Helical" evidence="3">
    <location>
        <begin position="986"/>
        <end position="1006"/>
    </location>
</feature>
<feature type="domain" description="ABC transmembrane type-1 1" evidence="3">
    <location>
        <begin position="80"/>
        <end position="368"/>
    </location>
</feature>
<feature type="domain" description="ABC transporter 1" evidence="2">
    <location>
        <begin position="403"/>
        <end position="639"/>
    </location>
</feature>
<feature type="domain" description="ABC transmembrane type-1 2" evidence="3">
    <location>
        <begin position="730"/>
        <end position="1017"/>
    </location>
</feature>
<feature type="domain" description="ABC transporter 2" evidence="2">
    <location>
        <begin position="1052"/>
        <end position="1289"/>
    </location>
</feature>
<feature type="region of interest" description="Disordered" evidence="4">
    <location>
        <begin position="1"/>
        <end position="59"/>
    </location>
</feature>
<feature type="region of interest" description="Disordered" evidence="4">
    <location>
        <begin position="640"/>
        <end position="672"/>
    </location>
</feature>
<feature type="compositionally biased region" description="Basic and acidic residues" evidence="4">
    <location>
        <begin position="9"/>
        <end position="59"/>
    </location>
</feature>
<feature type="compositionally biased region" description="Basic and acidic residues" evidence="4">
    <location>
        <begin position="640"/>
        <end position="662"/>
    </location>
</feature>
<feature type="binding site" evidence="2">
    <location>
        <begin position="438"/>
        <end position="445"/>
    </location>
    <ligand>
        <name>ATP</name>
        <dbReference type="ChEBI" id="CHEBI:30616"/>
        <label>1</label>
    </ligand>
</feature>
<feature type="binding site" evidence="2">
    <location>
        <begin position="1087"/>
        <end position="1094"/>
    </location>
    <ligand>
        <name>ATP</name>
        <dbReference type="ChEBI" id="CHEBI:30616"/>
        <label>2</label>
    </ligand>
</feature>
<feature type="modified residue" description="Phosphoserine" evidence="6">
    <location>
        <position position="657"/>
    </location>
</feature>
<feature type="modified residue" description="Phosphoserine" evidence="6">
    <location>
        <position position="660"/>
    </location>
</feature>
<feature type="glycosylation site" description="N-linked (GlcNAc...) asparagine" evidence="1">
    <location>
        <position position="113"/>
    </location>
</feature>
<feature type="glycosylation site" description="N-linked (GlcNAc...) asparagine" evidence="1">
    <location>
        <position position="409"/>
    </location>
</feature>
<feature type="glycosylation site" description="N-linked (GlcNAc...) asparagine" evidence="1">
    <location>
        <position position="505"/>
    </location>
</feature>
<feature type="glycosylation site" description="N-linked (GlcNAc...) asparagine" evidence="1">
    <location>
        <position position="519"/>
    </location>
</feature>
<feature type="glycosylation site" description="N-linked (GlcNAc...) asparagine" evidence="1">
    <location>
        <position position="590"/>
    </location>
</feature>
<feature type="glycosylation site" description="N-linked (GlcNAc...) asparagine" evidence="1">
    <location>
        <position position="826"/>
    </location>
</feature>
<feature type="glycosylation site" description="N-linked (GlcNAc...) asparagine" evidence="1">
    <location>
        <position position="1141"/>
    </location>
</feature>
<feature type="glycosylation site" description="N-linked (GlcNAc...) asparagine" evidence="1">
    <location>
        <position position="1240"/>
    </location>
</feature>
<protein>
    <recommendedName>
        <fullName>ABC transporter B family member 21</fullName>
        <shortName>ABC transporter ABCB.21</shortName>
        <shortName>AtABCB21</shortName>
    </recommendedName>
    <alternativeName>
        <fullName>Multidrug resistance protein 17</fullName>
    </alternativeName>
    <alternativeName>
        <fullName>P-glycoprotein 21</fullName>
    </alternativeName>
</protein>
<evidence type="ECO:0000255" key="1"/>
<evidence type="ECO:0000255" key="2">
    <source>
        <dbReference type="PROSITE-ProRule" id="PRU00434"/>
    </source>
</evidence>
<evidence type="ECO:0000255" key="3">
    <source>
        <dbReference type="PROSITE-ProRule" id="PRU00441"/>
    </source>
</evidence>
<evidence type="ECO:0000256" key="4">
    <source>
        <dbReference type="SAM" id="MobiDB-lite"/>
    </source>
</evidence>
<evidence type="ECO:0000305" key="5"/>
<evidence type="ECO:0007744" key="6">
    <source>
    </source>
</evidence>
<keyword id="KW-0067">ATP-binding</keyword>
<keyword id="KW-0325">Glycoprotein</keyword>
<keyword id="KW-0472">Membrane</keyword>
<keyword id="KW-0547">Nucleotide-binding</keyword>
<keyword id="KW-0597">Phosphoprotein</keyword>
<keyword id="KW-1185">Reference proteome</keyword>
<keyword id="KW-0677">Repeat</keyword>
<keyword id="KW-0812">Transmembrane</keyword>
<keyword id="KW-1133">Transmembrane helix</keyword>
<keyword id="KW-0813">Transport</keyword>
<sequence>MDSVIESEEGLKVDSPNRADAETSNSKIHEEDEKELKTESDLKEEKKKTEKNKQEEDEKTKTVPFHKLFAFADSFDIILMILGTIGAVGNGLGFPIMTILFGDVIDVFGQNQNSSDVSDKIAKVALKFVYLGLGTLVAALLQVSGWMISGERQAGRIRSLYLQTILRQDIAFFDVETNTGEVVGRMSGDTVLIQDAMGEKVGKAIQLVSTFIGGFVIAFTEGWLLTLVMVSSIPLLVMSGAALAIVISKMASRGQTSYAKAAVVVEQTVGSIRTVASFTGEKQAISNYNKHLVSAYRAGVFEGASTGLGLGTLNIVIFCTYALAVWYGGKMILEKGYTGGQVLIIIFAVLTGSMSLGQASPCLSAFAAGQAAAYKMFEAIKRKPEIDASDTTGKVLDDIRGDIELNNVNFSYPARPEEQIFRGFSLSISSGSTVALVGQSGSGKSTVVSLIERFYDPQSGEVRIDGINLKEFQLKWIRSKIGLVSQEPVLFTSSIKENIAYGKENATVEEIRKATELANASKFIDKLPQGLDTMVGEHGTQLSGGQKQRIAVARAILKDPRILLLDEATSALDAESERIVQEALDRIMVNRTTVVVAHRLSTVRNADMIAVIHQGKIVEKGSHSELLRDPEGAYSQLIRLQEDTKQTEDSTDEQKLSMESMKRSSLRKSSLSRSLSKRSSSFSMFGFPAGIDTNNEAIPEKDIKVSTPIKEKKVSFFRVAALNKPEIPMLILGSIAAVLNGVILPIFGILISSVIKAFFKPPEQLKSDTRFWAIIFMLLGVASMVVFPAQTIFFSIAGCKLVQRIRSMCFEKVVRMEVGWFDETENSSGAIGARLSADAATVRGLVGDALAQTVQNLASVTAGLVIAFVASWQLAFIVLAMLPLIGLNGYIYMKFMVGFSADAKRMYEEASQVANDAVGSIRTVASFCAEEKVMKMYKKKCEGPMRTGIRQGIVSGIGFGVSFFVLFSSYAASFYAGARLVDDGKTTFDSVFRVFFALTMAAVAISQSSSLSPDSSKASNAAASIFAVIDRESKIDPSDESGRVLDNVKGDIELRHISFKYPSRPDVQIFQDLCLSIRAGKTIALVGESGSGKSTVIALLQRFYDPDSGQITLDGVEIKTLQLKWLRQQTGLVSQEPVLFNETIRANIAYGKGGDATETEIVSAAELSNAHGFISGLQQGYDTMVGERGVQLSGGQKQRVAIARAIVKDPKVLLLDEATSALDAESERVVQDALDRVMVNRTTVVVAHRLSTIKNADVIAVVKNGVIVEKGKHETLINIKDGVYASLVQLHLSAST</sequence>
<comment type="subcellular location">
    <subcellularLocation>
        <location evidence="3">Membrane</location>
        <topology evidence="3">Multi-pass membrane protein</topology>
    </subcellularLocation>
</comment>
<comment type="similarity">
    <text evidence="5">Belongs to the ABC transporter superfamily. ABCB family. Multidrug resistance exporter (TC 3.A.1.201) subfamily.</text>
</comment>
<comment type="sequence caution" evidence="5">
    <conflict type="erroneous gene model prediction">
        <sequence resource="EMBL-CDS" id="CAB71875"/>
    </conflict>
</comment>
<reference key="1">
    <citation type="journal article" date="2000" name="Nature">
        <title>Sequence and analysis of chromosome 3 of the plant Arabidopsis thaliana.</title>
        <authorList>
            <person name="Salanoubat M."/>
            <person name="Lemcke K."/>
            <person name="Rieger M."/>
            <person name="Ansorge W."/>
            <person name="Unseld M."/>
            <person name="Fartmann B."/>
            <person name="Valle G."/>
            <person name="Bloecker H."/>
            <person name="Perez-Alonso M."/>
            <person name="Obermaier B."/>
            <person name="Delseny M."/>
            <person name="Boutry M."/>
            <person name="Grivell L.A."/>
            <person name="Mache R."/>
            <person name="Puigdomenech P."/>
            <person name="De Simone V."/>
            <person name="Choisne N."/>
            <person name="Artiguenave F."/>
            <person name="Robert C."/>
            <person name="Brottier P."/>
            <person name="Wincker P."/>
            <person name="Cattolico L."/>
            <person name="Weissenbach J."/>
            <person name="Saurin W."/>
            <person name="Quetier F."/>
            <person name="Schaefer M."/>
            <person name="Mueller-Auer S."/>
            <person name="Gabel C."/>
            <person name="Fuchs M."/>
            <person name="Benes V."/>
            <person name="Wurmbach E."/>
            <person name="Drzonek H."/>
            <person name="Erfle H."/>
            <person name="Jordan N."/>
            <person name="Bangert S."/>
            <person name="Wiedelmann R."/>
            <person name="Kranz H."/>
            <person name="Voss H."/>
            <person name="Holland R."/>
            <person name="Brandt P."/>
            <person name="Nyakatura G."/>
            <person name="Vezzi A."/>
            <person name="D'Angelo M."/>
            <person name="Pallavicini A."/>
            <person name="Toppo S."/>
            <person name="Simionati B."/>
            <person name="Conrad A."/>
            <person name="Hornischer K."/>
            <person name="Kauer G."/>
            <person name="Loehnert T.-H."/>
            <person name="Nordsiek G."/>
            <person name="Reichelt J."/>
            <person name="Scharfe M."/>
            <person name="Schoen O."/>
            <person name="Bargues M."/>
            <person name="Terol J."/>
            <person name="Climent J."/>
            <person name="Navarro P."/>
            <person name="Collado C."/>
            <person name="Perez-Perez A."/>
            <person name="Ottenwaelder B."/>
            <person name="Duchemin D."/>
            <person name="Cooke R."/>
            <person name="Laudie M."/>
            <person name="Berger-Llauro C."/>
            <person name="Purnelle B."/>
            <person name="Masuy D."/>
            <person name="de Haan M."/>
            <person name="Maarse A.C."/>
            <person name="Alcaraz J.-P."/>
            <person name="Cottet A."/>
            <person name="Casacuberta E."/>
            <person name="Monfort A."/>
            <person name="Argiriou A."/>
            <person name="Flores M."/>
            <person name="Liguori R."/>
            <person name="Vitale D."/>
            <person name="Mannhaupt G."/>
            <person name="Haase D."/>
            <person name="Schoof H."/>
            <person name="Rudd S."/>
            <person name="Zaccaria P."/>
            <person name="Mewes H.-W."/>
            <person name="Mayer K.F.X."/>
            <person name="Kaul S."/>
            <person name="Town C.D."/>
            <person name="Koo H.L."/>
            <person name="Tallon L.J."/>
            <person name="Jenkins J."/>
            <person name="Rooney T."/>
            <person name="Rizzo M."/>
            <person name="Walts A."/>
            <person name="Utterback T."/>
            <person name="Fujii C.Y."/>
            <person name="Shea T.P."/>
            <person name="Creasy T.H."/>
            <person name="Haas B."/>
            <person name="Maiti R."/>
            <person name="Wu D."/>
            <person name="Peterson J."/>
            <person name="Van Aken S."/>
            <person name="Pai G."/>
            <person name="Militscher J."/>
            <person name="Sellers P."/>
            <person name="Gill J.E."/>
            <person name="Feldblyum T.V."/>
            <person name="Preuss D."/>
            <person name="Lin X."/>
            <person name="Nierman W.C."/>
            <person name="Salzberg S.L."/>
            <person name="White O."/>
            <person name="Venter J.C."/>
            <person name="Fraser C.M."/>
            <person name="Kaneko T."/>
            <person name="Nakamura Y."/>
            <person name="Sato S."/>
            <person name="Kato T."/>
            <person name="Asamizu E."/>
            <person name="Sasamoto S."/>
            <person name="Kimura T."/>
            <person name="Idesawa K."/>
            <person name="Kawashima K."/>
            <person name="Kishida Y."/>
            <person name="Kiyokawa C."/>
            <person name="Kohara M."/>
            <person name="Matsumoto M."/>
            <person name="Matsuno A."/>
            <person name="Muraki A."/>
            <person name="Nakayama S."/>
            <person name="Nakazaki N."/>
            <person name="Shinpo S."/>
            <person name="Takeuchi C."/>
            <person name="Wada T."/>
            <person name="Watanabe A."/>
            <person name="Yamada M."/>
            <person name="Yasuda M."/>
            <person name="Tabata S."/>
        </authorList>
    </citation>
    <scope>NUCLEOTIDE SEQUENCE [LARGE SCALE GENOMIC DNA]</scope>
    <source>
        <strain>cv. Columbia</strain>
    </source>
</reference>
<reference key="2">
    <citation type="journal article" date="2017" name="Plant J.">
        <title>Araport11: a complete reannotation of the Arabidopsis thaliana reference genome.</title>
        <authorList>
            <person name="Cheng C.Y."/>
            <person name="Krishnakumar V."/>
            <person name="Chan A.P."/>
            <person name="Thibaud-Nissen F."/>
            <person name="Schobel S."/>
            <person name="Town C.D."/>
        </authorList>
    </citation>
    <scope>GENOME REANNOTATION</scope>
    <source>
        <strain>cv. Columbia</strain>
    </source>
</reference>
<reference key="3">
    <citation type="journal article" date="2001" name="J. Biol. Chem.">
        <title>The Arabidopsis thaliana ABC protein superfamily, a complete inventory.</title>
        <authorList>
            <person name="Sanchez-Fernandez R."/>
            <person name="Davies T.G."/>
            <person name="Coleman J.O."/>
            <person name="Rea P.A."/>
        </authorList>
    </citation>
    <scope>GENE FAMILY</scope>
    <scope>NOMENCLATURE</scope>
</reference>
<reference key="4">
    <citation type="journal article" date="2004" name="Plant Cell">
        <title>Phosphoproteomics of the Arabidopsis plasma membrane and a new phosphorylation site database.</title>
        <authorList>
            <person name="Nuehse T.S."/>
            <person name="Stensballe A."/>
            <person name="Jensen O.N."/>
            <person name="Peck S.C."/>
        </authorList>
    </citation>
    <scope>PHOSPHORYLATION [LARGE SCALE ANALYSIS] AT SER-657 AND SER-660</scope>
    <scope>IDENTIFICATION BY MASS SPECTROMETRY [LARGE SCALE ANALYSIS]</scope>
</reference>
<reference key="5">
    <citation type="journal article" date="2008" name="Trends Plant Sci.">
        <title>Plant ABC proteins - a unified nomenclature and updated inventory.</title>
        <authorList>
            <person name="Verrier P.J."/>
            <person name="Bird D."/>
            <person name="Burla B."/>
            <person name="Dassa E."/>
            <person name="Forestier C."/>
            <person name="Geisler M."/>
            <person name="Klein M."/>
            <person name="Kolukisaoglu H.U."/>
            <person name="Lee Y."/>
            <person name="Martinoia E."/>
            <person name="Murphy A."/>
            <person name="Rea P.A."/>
            <person name="Samuels L."/>
            <person name="Schulz B."/>
            <person name="Spalding E.J."/>
            <person name="Yazaki K."/>
            <person name="Theodoulou F.L."/>
        </authorList>
    </citation>
    <scope>GENE FAMILY</scope>
    <scope>NOMENCLATURE</scope>
</reference>
<reference key="6">
    <citation type="journal article" date="2009" name="Plant Physiol.">
        <title>Large-scale Arabidopsis phosphoproteome profiling reveals novel chloroplast kinase substrates and phosphorylation networks.</title>
        <authorList>
            <person name="Reiland S."/>
            <person name="Messerli G."/>
            <person name="Baerenfaller K."/>
            <person name="Gerrits B."/>
            <person name="Endler A."/>
            <person name="Grossmann J."/>
            <person name="Gruissem W."/>
            <person name="Baginsky S."/>
        </authorList>
    </citation>
    <scope>IDENTIFICATION BY MASS SPECTROMETRY [LARGE SCALE ANALYSIS]</scope>
</reference>
<gene>
    <name type="primary">ABCB21</name>
    <name type="synonym">MDR17</name>
    <name type="synonym">PGP21</name>
    <name type="ordered locus">At3g62150</name>
    <name type="ORF">T17J13.110</name>
</gene>
<proteinExistence type="evidence at protein level"/>
<name>AB21B_ARATH</name>